<sequence length="251" mass="29266">MPKRDLPWRSMAGTSKVSRNANYSPRAGIGPRINKAAEWVNRPMYRKPRMYRTLRTTDVARGCEGPCKVQSFEQRHDISHIGKVMCISDVTRGNGITHRVGKRFCVKSVYILGKIWMDENIKLKNHTNSVMFWLVRDRRPYGTPMDIWTVFNMFDNEPSTATVKNDLRDRYQVMHKFYGKVTGGQYASNEQAIVKRFWKVNNHVVYNHQEAGKYENHTENALLLYMACTHASNPVYATLKIRIYFYDSITN</sequence>
<reference key="1">
    <citation type="journal article" date="1992" name="J. Gen. Virol.">
        <title>The nucleotide sequence of tomato mottle virus, a new geminivirus isolated from tomatoes in Florida.</title>
        <authorList>
            <person name="Abouzid A.M."/>
            <person name="Polston J.E."/>
            <person name="Hiebert E."/>
        </authorList>
    </citation>
    <scope>NUCLEOTIDE SEQUENCE [GENOMIC DNA]</scope>
</reference>
<comment type="function">
    <text>Encapsidates the viral DNA into characteristic twinned ('geminate') particles. Binds the genomic viral ssDNA and shuttles it into and out of the cell nucleus. The CP of bipartite geminiviruses is not required for cell-to-cell or systemic movement.</text>
</comment>
<comment type="subunit">
    <text evidence="1">Homomultimer. Binds to single-stranded and double-stranded viral DNA. Interacts (via nuclear localization signals) with host importin alpha-1a (By similarity).</text>
</comment>
<comment type="subcellular location">
    <subcellularLocation>
        <location evidence="3">Virion</location>
    </subcellularLocation>
    <subcellularLocation>
        <location evidence="1">Host nucleus</location>
    </subcellularLocation>
    <text evidence="1">It is actively transported into the host cell nucleus. It may be exported out of the nucleus through a nuclear export signal for cell-to-cell movement and spread (By similarity).</text>
</comment>
<comment type="similarity">
    <text evidence="3">Belongs to the geminiviridae capsid protein family.</text>
</comment>
<dbReference type="EMBL" id="L14460">
    <property type="protein sequence ID" value="AAC32415.1"/>
    <property type="molecule type" value="Genomic_DNA"/>
</dbReference>
<dbReference type="PIR" id="JQ1869">
    <property type="entry name" value="JQ1869"/>
</dbReference>
<dbReference type="RefSeq" id="NP_047250.1">
    <property type="nucleotide sequence ID" value="NC_001938.1"/>
</dbReference>
<dbReference type="SMR" id="P36277"/>
<dbReference type="GeneID" id="956410"/>
<dbReference type="KEGG" id="vg:956410"/>
<dbReference type="Proteomes" id="UP000008249">
    <property type="component" value="Genome"/>
</dbReference>
<dbReference type="GO" id="GO:0043657">
    <property type="term" value="C:host cell"/>
    <property type="evidence" value="ECO:0007669"/>
    <property type="project" value="GOC"/>
</dbReference>
<dbReference type="GO" id="GO:0042025">
    <property type="term" value="C:host cell nucleus"/>
    <property type="evidence" value="ECO:0007669"/>
    <property type="project" value="UniProtKB-SubCell"/>
</dbReference>
<dbReference type="GO" id="GO:0039615">
    <property type="term" value="C:T=1 icosahedral viral capsid"/>
    <property type="evidence" value="ECO:0007669"/>
    <property type="project" value="UniProtKB-KW"/>
</dbReference>
<dbReference type="GO" id="GO:0003677">
    <property type="term" value="F:DNA binding"/>
    <property type="evidence" value="ECO:0007669"/>
    <property type="project" value="UniProtKB-KW"/>
</dbReference>
<dbReference type="GO" id="GO:0005198">
    <property type="term" value="F:structural molecule activity"/>
    <property type="evidence" value="ECO:0007669"/>
    <property type="project" value="InterPro"/>
</dbReference>
<dbReference type="GO" id="GO:0008270">
    <property type="term" value="F:zinc ion binding"/>
    <property type="evidence" value="ECO:0007669"/>
    <property type="project" value="UniProtKB-KW"/>
</dbReference>
<dbReference type="GO" id="GO:0046718">
    <property type="term" value="P:symbiont entry into host cell"/>
    <property type="evidence" value="ECO:0007669"/>
    <property type="project" value="UniProtKB-KW"/>
</dbReference>
<dbReference type="GO" id="GO:0075732">
    <property type="term" value="P:viral penetration into host nucleus"/>
    <property type="evidence" value="ECO:0007669"/>
    <property type="project" value="UniProtKB-KW"/>
</dbReference>
<dbReference type="Gene3D" id="2.60.120.20">
    <property type="match status" value="1"/>
</dbReference>
<dbReference type="InterPro" id="IPR000650">
    <property type="entry name" value="Gem_coat_AR1"/>
</dbReference>
<dbReference type="InterPro" id="IPR000263">
    <property type="entry name" value="GV_A/BR1_coat"/>
</dbReference>
<dbReference type="InterPro" id="IPR029053">
    <property type="entry name" value="Viral_coat"/>
</dbReference>
<dbReference type="Pfam" id="PF00844">
    <property type="entry name" value="Gemini_coat"/>
    <property type="match status" value="1"/>
</dbReference>
<dbReference type="PRINTS" id="PR00224">
    <property type="entry name" value="GEMCOATAR1"/>
</dbReference>
<dbReference type="PRINTS" id="PR00223">
    <property type="entry name" value="GEMCOATARBR1"/>
</dbReference>
<feature type="chain" id="PRO_0000222193" description="Capsid protein">
    <location>
        <begin position="1"/>
        <end position="251"/>
    </location>
</feature>
<feature type="zinc finger region" evidence="2">
    <location>
        <begin position="63"/>
        <end position="80"/>
    </location>
</feature>
<feature type="short sequence motif" description="Bipartite nuclear localization signal" evidence="2">
    <location>
        <begin position="3"/>
        <end position="20"/>
    </location>
</feature>
<feature type="short sequence motif" description="Nuclear localization signal" evidence="2">
    <location>
        <begin position="35"/>
        <end position="49"/>
    </location>
</feature>
<feature type="short sequence motif" description="Nuclear export signal" evidence="2">
    <location>
        <begin position="96"/>
        <end position="117"/>
    </location>
</feature>
<feature type="short sequence motif" description="Bipartite nuclear localization signal" evidence="2">
    <location>
        <begin position="195"/>
        <end position="242"/>
    </location>
</feature>
<proteinExistence type="inferred from homology"/>
<accession>P36277</accession>
<keyword id="KW-0167">Capsid protein</keyword>
<keyword id="KW-0238">DNA-binding</keyword>
<keyword id="KW-1048">Host nucleus</keyword>
<keyword id="KW-0945">Host-virus interaction</keyword>
<keyword id="KW-0479">Metal-binding</keyword>
<keyword id="KW-1140">T=1 icosahedral capsid protein</keyword>
<keyword id="KW-1163">Viral penetration into host nucleus</keyword>
<keyword id="KW-0946">Virion</keyword>
<keyword id="KW-1160">Virus entry into host cell</keyword>
<keyword id="KW-0862">Zinc</keyword>
<keyword id="KW-0863">Zinc-finger</keyword>
<name>CAPSD_TMOV</name>
<gene>
    <name type="ORF">AR1</name>
    <name type="ORF">AV1</name>
</gene>
<protein>
    <recommendedName>
        <fullName>Capsid protein</fullName>
    </recommendedName>
    <alternativeName>
        <fullName>Coat protein</fullName>
        <shortName>CP</shortName>
    </alternativeName>
</protein>
<organism>
    <name type="scientific">Tomato mottle virus (isolate Florida)</name>
    <name type="common">ToMoV</name>
    <dbReference type="NCBI Taxonomy" id="223359"/>
    <lineage>
        <taxon>Viruses</taxon>
        <taxon>Monodnaviria</taxon>
        <taxon>Shotokuvirae</taxon>
        <taxon>Cressdnaviricota</taxon>
        <taxon>Repensiviricetes</taxon>
        <taxon>Geplafuvirales</taxon>
        <taxon>Geminiviridae</taxon>
        <taxon>Begomovirus</taxon>
        <taxon>Tomato mottle virus</taxon>
    </lineage>
</organism>
<organismHost>
    <name type="scientific">Nicotiana tabacum</name>
    <name type="common">Common tobacco</name>
    <dbReference type="NCBI Taxonomy" id="4097"/>
</organismHost>
<evidence type="ECO:0000250" key="1"/>
<evidence type="ECO:0000255" key="2"/>
<evidence type="ECO:0000305" key="3"/>